<accession>B9KBJ9</accession>
<dbReference type="EMBL" id="CP000916">
    <property type="protein sequence ID" value="ACM22395.1"/>
    <property type="molecule type" value="Genomic_DNA"/>
</dbReference>
<dbReference type="RefSeq" id="WP_012645105.1">
    <property type="nucleotide sequence ID" value="NC_011978.1"/>
</dbReference>
<dbReference type="SMR" id="B9KBJ9"/>
<dbReference type="STRING" id="309803.CTN_0219"/>
<dbReference type="KEGG" id="tna:CTN_0219"/>
<dbReference type="eggNOG" id="COG0080">
    <property type="taxonomic scope" value="Bacteria"/>
</dbReference>
<dbReference type="HOGENOM" id="CLU_074237_2_1_0"/>
<dbReference type="Proteomes" id="UP000000445">
    <property type="component" value="Chromosome"/>
</dbReference>
<dbReference type="GO" id="GO:0022625">
    <property type="term" value="C:cytosolic large ribosomal subunit"/>
    <property type="evidence" value="ECO:0007669"/>
    <property type="project" value="TreeGrafter"/>
</dbReference>
<dbReference type="GO" id="GO:0070180">
    <property type="term" value="F:large ribosomal subunit rRNA binding"/>
    <property type="evidence" value="ECO:0007669"/>
    <property type="project" value="UniProtKB-UniRule"/>
</dbReference>
<dbReference type="GO" id="GO:0003735">
    <property type="term" value="F:structural constituent of ribosome"/>
    <property type="evidence" value="ECO:0007669"/>
    <property type="project" value="InterPro"/>
</dbReference>
<dbReference type="GO" id="GO:0006412">
    <property type="term" value="P:translation"/>
    <property type="evidence" value="ECO:0007669"/>
    <property type="project" value="UniProtKB-UniRule"/>
</dbReference>
<dbReference type="CDD" id="cd00349">
    <property type="entry name" value="Ribosomal_L11"/>
    <property type="match status" value="1"/>
</dbReference>
<dbReference type="FunFam" id="1.10.10.250:FF:000001">
    <property type="entry name" value="50S ribosomal protein L11"/>
    <property type="match status" value="1"/>
</dbReference>
<dbReference type="FunFam" id="3.30.1550.10:FF:000001">
    <property type="entry name" value="50S ribosomal protein L11"/>
    <property type="match status" value="1"/>
</dbReference>
<dbReference type="Gene3D" id="1.10.10.250">
    <property type="entry name" value="Ribosomal protein L11, C-terminal domain"/>
    <property type="match status" value="1"/>
</dbReference>
<dbReference type="Gene3D" id="3.30.1550.10">
    <property type="entry name" value="Ribosomal protein L11/L12, N-terminal domain"/>
    <property type="match status" value="1"/>
</dbReference>
<dbReference type="HAMAP" id="MF_00736">
    <property type="entry name" value="Ribosomal_uL11"/>
    <property type="match status" value="1"/>
</dbReference>
<dbReference type="InterPro" id="IPR000911">
    <property type="entry name" value="Ribosomal_uL11"/>
</dbReference>
<dbReference type="InterPro" id="IPR006519">
    <property type="entry name" value="Ribosomal_uL11_bac-typ"/>
</dbReference>
<dbReference type="InterPro" id="IPR020783">
    <property type="entry name" value="Ribosomal_uL11_C"/>
</dbReference>
<dbReference type="InterPro" id="IPR036769">
    <property type="entry name" value="Ribosomal_uL11_C_sf"/>
</dbReference>
<dbReference type="InterPro" id="IPR020785">
    <property type="entry name" value="Ribosomal_uL11_CS"/>
</dbReference>
<dbReference type="InterPro" id="IPR020784">
    <property type="entry name" value="Ribosomal_uL11_N"/>
</dbReference>
<dbReference type="InterPro" id="IPR036796">
    <property type="entry name" value="Ribosomal_uL11_N_sf"/>
</dbReference>
<dbReference type="NCBIfam" id="TIGR01632">
    <property type="entry name" value="L11_bact"/>
    <property type="match status" value="1"/>
</dbReference>
<dbReference type="PANTHER" id="PTHR11661">
    <property type="entry name" value="60S RIBOSOMAL PROTEIN L12"/>
    <property type="match status" value="1"/>
</dbReference>
<dbReference type="PANTHER" id="PTHR11661:SF1">
    <property type="entry name" value="LARGE RIBOSOMAL SUBUNIT PROTEIN UL11M"/>
    <property type="match status" value="1"/>
</dbReference>
<dbReference type="Pfam" id="PF00298">
    <property type="entry name" value="Ribosomal_L11"/>
    <property type="match status" value="1"/>
</dbReference>
<dbReference type="Pfam" id="PF03946">
    <property type="entry name" value="Ribosomal_L11_N"/>
    <property type="match status" value="1"/>
</dbReference>
<dbReference type="SMART" id="SM00649">
    <property type="entry name" value="RL11"/>
    <property type="match status" value="1"/>
</dbReference>
<dbReference type="SUPFAM" id="SSF54747">
    <property type="entry name" value="Ribosomal L11/L12e N-terminal domain"/>
    <property type="match status" value="1"/>
</dbReference>
<dbReference type="SUPFAM" id="SSF46906">
    <property type="entry name" value="Ribosomal protein L11, C-terminal domain"/>
    <property type="match status" value="1"/>
</dbReference>
<dbReference type="PROSITE" id="PS00359">
    <property type="entry name" value="RIBOSOMAL_L11"/>
    <property type="match status" value="1"/>
</dbReference>
<name>RL11_THENN</name>
<protein>
    <recommendedName>
        <fullName evidence="1">Large ribosomal subunit protein uL11</fullName>
    </recommendedName>
    <alternativeName>
        <fullName evidence="2">50S ribosomal protein L11</fullName>
    </alternativeName>
</protein>
<gene>
    <name evidence="1" type="primary">rplK</name>
    <name type="ordered locus">CTN_0219</name>
</gene>
<feature type="chain" id="PRO_1000195739" description="Large ribosomal subunit protein uL11">
    <location>
        <begin position="1"/>
        <end position="141"/>
    </location>
</feature>
<evidence type="ECO:0000255" key="1">
    <source>
        <dbReference type="HAMAP-Rule" id="MF_00736"/>
    </source>
</evidence>
<evidence type="ECO:0000305" key="2"/>
<proteinExistence type="inferred from homology"/>
<sequence length="141" mass="15144">MAKKVAAQIKLQLPAGKATPAPPVGPALGQHGVNIMEFCKRFNAETADKAGMILPVVITVYEDKSFTFIIKTPPASFLLKKAAGIESGSSEPKRKIVGKVTRKQIEEIAKIKMPDLNANDLEAAMRIIEGTARSMGIEVVD</sequence>
<keyword id="KW-0488">Methylation</keyword>
<keyword id="KW-0687">Ribonucleoprotein</keyword>
<keyword id="KW-0689">Ribosomal protein</keyword>
<keyword id="KW-0694">RNA-binding</keyword>
<keyword id="KW-0699">rRNA-binding</keyword>
<organism>
    <name type="scientific">Thermotoga neapolitana (strain ATCC 49049 / DSM 4359 / NBRC 107923 / NS-E)</name>
    <dbReference type="NCBI Taxonomy" id="309803"/>
    <lineage>
        <taxon>Bacteria</taxon>
        <taxon>Thermotogati</taxon>
        <taxon>Thermotogota</taxon>
        <taxon>Thermotogae</taxon>
        <taxon>Thermotogales</taxon>
        <taxon>Thermotogaceae</taxon>
        <taxon>Thermotoga</taxon>
    </lineage>
</organism>
<comment type="function">
    <text evidence="1">Forms part of the ribosomal stalk which helps the ribosome interact with GTP-bound translation factors.</text>
</comment>
<comment type="subunit">
    <text evidence="1">Part of the ribosomal stalk of the 50S ribosomal subunit. Interacts with L10 and the large rRNA to form the base of the stalk. L10 forms an elongated spine to which L12 dimers bind in a sequential fashion forming a multimeric L10(L12)X complex.</text>
</comment>
<comment type="PTM">
    <text evidence="1">One or more lysine residues are methylated.</text>
</comment>
<comment type="similarity">
    <text evidence="1">Belongs to the universal ribosomal protein uL11 family.</text>
</comment>
<reference key="1">
    <citation type="submission" date="2007-11" db="EMBL/GenBank/DDBJ databases">
        <title>The genome sequence of the hyperthermophilic bacterium Thermotoga neapolitana.</title>
        <authorList>
            <person name="Lim S.K."/>
            <person name="Kim J.S."/>
            <person name="Cha S.H."/>
            <person name="Park B.C."/>
            <person name="Lee D.S."/>
            <person name="Tae H.S."/>
            <person name="Kim S.-J."/>
            <person name="Kim J.J."/>
            <person name="Park K.J."/>
            <person name="Lee S.Y."/>
        </authorList>
    </citation>
    <scope>NUCLEOTIDE SEQUENCE [LARGE SCALE GENOMIC DNA]</scope>
    <source>
        <strain>ATCC 49049 / DSM 4359 / NBRC 107923 / NS-E</strain>
    </source>
</reference>